<dbReference type="EC" id="1.14.11.2" evidence="4"/>
<dbReference type="EMBL" id="AK045008">
    <property type="protein sequence ID" value="BAC32183.1"/>
    <property type="molecule type" value="mRNA"/>
</dbReference>
<dbReference type="EMBL" id="AK160798">
    <property type="protein sequence ID" value="BAE36020.1"/>
    <property type="molecule type" value="mRNA"/>
</dbReference>
<dbReference type="EMBL" id="AK169726">
    <property type="protein sequence ID" value="BAE41331.1"/>
    <property type="molecule type" value="mRNA"/>
</dbReference>
<dbReference type="EMBL" id="BC009654">
    <property type="protein sequence ID" value="AAH09654.1"/>
    <property type="molecule type" value="mRNA"/>
</dbReference>
<dbReference type="EMBL" id="U16162">
    <property type="protein sequence ID" value="AAC52197.1"/>
    <property type="molecule type" value="mRNA"/>
</dbReference>
<dbReference type="CCDS" id="CCDS23863.1">
    <molecule id="Q60715-1"/>
</dbReference>
<dbReference type="CCDS" id="CCDS83698.1">
    <molecule id="Q60715-2"/>
</dbReference>
<dbReference type="PIR" id="I49134">
    <property type="entry name" value="I49134"/>
</dbReference>
<dbReference type="RefSeq" id="NP_001303300.1">
    <molecule id="Q60715-2"/>
    <property type="nucleotide sequence ID" value="NM_001316371.2"/>
</dbReference>
<dbReference type="RefSeq" id="NP_035160.1">
    <molecule id="Q60715-1"/>
    <property type="nucleotide sequence ID" value="NM_011030.3"/>
</dbReference>
<dbReference type="SMR" id="Q60715"/>
<dbReference type="BioGRID" id="202006">
    <property type="interactions" value="14"/>
</dbReference>
<dbReference type="FunCoup" id="Q60715">
    <property type="interactions" value="1575"/>
</dbReference>
<dbReference type="IntAct" id="Q60715">
    <property type="interactions" value="3"/>
</dbReference>
<dbReference type="MINT" id="Q60715"/>
<dbReference type="STRING" id="10090.ENSMUSP00000009789"/>
<dbReference type="GlyCosmos" id="Q60715">
    <property type="glycosylation" value="2 sites, No reported glycans"/>
</dbReference>
<dbReference type="GlyGen" id="Q60715">
    <property type="glycosylation" value="2 sites, 1 N-linked glycan (1 site)"/>
</dbReference>
<dbReference type="iPTMnet" id="Q60715"/>
<dbReference type="PhosphoSitePlus" id="Q60715"/>
<dbReference type="SwissPalm" id="Q60715"/>
<dbReference type="jPOST" id="Q60715"/>
<dbReference type="PaxDb" id="10090-ENSMUSP00000009789"/>
<dbReference type="PeptideAtlas" id="Q60715"/>
<dbReference type="ProteomicsDB" id="287752">
    <molecule id="Q60715-1"/>
</dbReference>
<dbReference type="ProteomicsDB" id="287753">
    <molecule id="Q60715-2"/>
</dbReference>
<dbReference type="Pumba" id="Q60715"/>
<dbReference type="Antibodypedia" id="2000">
    <property type="antibodies" value="250 antibodies from 32 providers"/>
</dbReference>
<dbReference type="DNASU" id="18451"/>
<dbReference type="Ensembl" id="ENSMUST00000009789.15">
    <molecule id="Q60715-1"/>
    <property type="protein sequence ID" value="ENSMUSP00000009789.9"/>
    <property type="gene ID" value="ENSMUSG00000019916.15"/>
</dbReference>
<dbReference type="Ensembl" id="ENSMUST00000105466.3">
    <molecule id="Q60715-2"/>
    <property type="protein sequence ID" value="ENSMUSP00000101106.3"/>
    <property type="gene ID" value="ENSMUSG00000019916.15"/>
</dbReference>
<dbReference type="GeneID" id="18451"/>
<dbReference type="KEGG" id="mmu:18451"/>
<dbReference type="UCSC" id="uc007fdo.2">
    <molecule id="Q60715-1"/>
    <property type="organism name" value="mouse"/>
</dbReference>
<dbReference type="UCSC" id="uc007fdp.2">
    <molecule id="Q60715-2"/>
    <property type="organism name" value="mouse"/>
</dbReference>
<dbReference type="AGR" id="MGI:97463"/>
<dbReference type="CTD" id="5033"/>
<dbReference type="MGI" id="MGI:97463">
    <property type="gene designation" value="P4ha1"/>
</dbReference>
<dbReference type="VEuPathDB" id="HostDB:ENSMUSG00000019916"/>
<dbReference type="eggNOG" id="KOG1591">
    <property type="taxonomic scope" value="Eukaryota"/>
</dbReference>
<dbReference type="GeneTree" id="ENSGT00940000156635"/>
<dbReference type="InParanoid" id="Q60715"/>
<dbReference type="OMA" id="NLTQYRN"/>
<dbReference type="OrthoDB" id="420380at2759"/>
<dbReference type="PhylomeDB" id="Q60715"/>
<dbReference type="TreeFam" id="TF313393"/>
<dbReference type="BRENDA" id="1.14.11.2">
    <property type="organism ID" value="3474"/>
</dbReference>
<dbReference type="Reactome" id="R-MMU-1650814">
    <property type="pathway name" value="Collagen biosynthesis and modifying enzymes"/>
</dbReference>
<dbReference type="BioGRID-ORCS" id="18451">
    <property type="hits" value="2 hits in 82 CRISPR screens"/>
</dbReference>
<dbReference type="ChiTaRS" id="P4ha1">
    <property type="organism name" value="mouse"/>
</dbReference>
<dbReference type="PRO" id="PR:Q60715"/>
<dbReference type="Proteomes" id="UP000000589">
    <property type="component" value="Chromosome 10"/>
</dbReference>
<dbReference type="RNAct" id="Q60715">
    <property type="molecule type" value="protein"/>
</dbReference>
<dbReference type="Bgee" id="ENSMUSG00000019916">
    <property type="expression patterns" value="Expressed in vault of skull and 273 other cell types or tissues"/>
</dbReference>
<dbReference type="ExpressionAtlas" id="Q60715">
    <property type="expression patterns" value="baseline and differential"/>
</dbReference>
<dbReference type="GO" id="GO:0005788">
    <property type="term" value="C:endoplasmic reticulum lumen"/>
    <property type="evidence" value="ECO:0007669"/>
    <property type="project" value="UniProtKB-SubCell"/>
</dbReference>
<dbReference type="GO" id="GO:0005739">
    <property type="term" value="C:mitochondrion"/>
    <property type="evidence" value="ECO:0007669"/>
    <property type="project" value="Ensembl"/>
</dbReference>
<dbReference type="GO" id="GO:0016222">
    <property type="term" value="C:procollagen-proline 4-dioxygenase complex"/>
    <property type="evidence" value="ECO:0000314"/>
    <property type="project" value="MGI"/>
</dbReference>
<dbReference type="GO" id="GO:0042802">
    <property type="term" value="F:identical protein binding"/>
    <property type="evidence" value="ECO:0007669"/>
    <property type="project" value="Ensembl"/>
</dbReference>
<dbReference type="GO" id="GO:0005506">
    <property type="term" value="F:iron ion binding"/>
    <property type="evidence" value="ECO:0007669"/>
    <property type="project" value="InterPro"/>
</dbReference>
<dbReference type="GO" id="GO:0031418">
    <property type="term" value="F:L-ascorbic acid binding"/>
    <property type="evidence" value="ECO:0007669"/>
    <property type="project" value="UniProtKB-KW"/>
</dbReference>
<dbReference type="GO" id="GO:0004656">
    <property type="term" value="F:procollagen-proline 4-dioxygenase activity"/>
    <property type="evidence" value="ECO:0000314"/>
    <property type="project" value="MGI"/>
</dbReference>
<dbReference type="GO" id="GO:0030199">
    <property type="term" value="P:collagen fibril organization"/>
    <property type="evidence" value="ECO:0000315"/>
    <property type="project" value="MGI"/>
</dbReference>
<dbReference type="FunFam" id="1.25.40.10:FF:000006">
    <property type="entry name" value="Prolyl 4-hydroxylase subunit alpha 2"/>
    <property type="match status" value="1"/>
</dbReference>
<dbReference type="FunFam" id="2.60.120.620:FF:000001">
    <property type="entry name" value="Prolyl 4-hydroxylase subunit alpha 2"/>
    <property type="match status" value="1"/>
</dbReference>
<dbReference type="Gene3D" id="6.10.140.1460">
    <property type="match status" value="1"/>
</dbReference>
<dbReference type="Gene3D" id="2.60.120.620">
    <property type="entry name" value="q2cbj1_9rhob like domain"/>
    <property type="match status" value="1"/>
</dbReference>
<dbReference type="Gene3D" id="1.25.40.10">
    <property type="entry name" value="Tetratricopeptide repeat domain"/>
    <property type="match status" value="1"/>
</dbReference>
<dbReference type="InterPro" id="IPR005123">
    <property type="entry name" value="Oxoglu/Fe-dep_dioxygenase_dom"/>
</dbReference>
<dbReference type="InterPro" id="IPR045054">
    <property type="entry name" value="P4HA-like"/>
</dbReference>
<dbReference type="InterPro" id="IPR006620">
    <property type="entry name" value="Pro_4_hyd_alph"/>
</dbReference>
<dbReference type="InterPro" id="IPR044862">
    <property type="entry name" value="Pro_4_hyd_alph_FE2OG_OXY"/>
</dbReference>
<dbReference type="InterPro" id="IPR013547">
    <property type="entry name" value="Pro_4_hyd_alph_N"/>
</dbReference>
<dbReference type="InterPro" id="IPR011990">
    <property type="entry name" value="TPR-like_helical_dom_sf"/>
</dbReference>
<dbReference type="InterPro" id="IPR019734">
    <property type="entry name" value="TPR_rpt"/>
</dbReference>
<dbReference type="PANTHER" id="PTHR10869">
    <property type="entry name" value="PROLYL 4-HYDROXYLASE ALPHA SUBUNIT"/>
    <property type="match status" value="1"/>
</dbReference>
<dbReference type="PANTHER" id="PTHR10869:SF101">
    <property type="entry name" value="PROLYL 4-HYDROXYLASE SUBUNIT ALPHA-1"/>
    <property type="match status" value="1"/>
</dbReference>
<dbReference type="Pfam" id="PF13640">
    <property type="entry name" value="2OG-FeII_Oxy_3"/>
    <property type="match status" value="1"/>
</dbReference>
<dbReference type="Pfam" id="PF08336">
    <property type="entry name" value="P4Ha_N"/>
    <property type="match status" value="1"/>
</dbReference>
<dbReference type="Pfam" id="PF23558">
    <property type="entry name" value="TPR_P4H"/>
    <property type="match status" value="1"/>
</dbReference>
<dbReference type="SMART" id="SM00702">
    <property type="entry name" value="P4Hc"/>
    <property type="match status" value="1"/>
</dbReference>
<dbReference type="SUPFAM" id="SSF48452">
    <property type="entry name" value="TPR-like"/>
    <property type="match status" value="1"/>
</dbReference>
<dbReference type="PROSITE" id="PS51471">
    <property type="entry name" value="FE2OG_OXY"/>
    <property type="match status" value="1"/>
</dbReference>
<dbReference type="PROSITE" id="PS50005">
    <property type="entry name" value="TPR"/>
    <property type="match status" value="1"/>
</dbReference>
<dbReference type="PROSITE" id="PS50293">
    <property type="entry name" value="TPR_REGION"/>
    <property type="match status" value="1"/>
</dbReference>
<gene>
    <name type="primary">P4ha1</name>
</gene>
<name>P4HA1_MOUSE</name>
<accession>Q60715</accession>
<accession>Q3TEB7</accession>
<accession>Q80T05</accession>
<accession>Q91VJ7</accession>
<keyword id="KW-0025">Alternative splicing</keyword>
<keyword id="KW-0223">Dioxygenase</keyword>
<keyword id="KW-0256">Endoplasmic reticulum</keyword>
<keyword id="KW-0325">Glycoprotein</keyword>
<keyword id="KW-0408">Iron</keyword>
<keyword id="KW-0479">Metal-binding</keyword>
<keyword id="KW-0560">Oxidoreductase</keyword>
<keyword id="KW-1185">Reference proteome</keyword>
<keyword id="KW-0732">Signal</keyword>
<keyword id="KW-0802">TPR repeat</keyword>
<keyword id="KW-0847">Vitamin C</keyword>
<comment type="function">
    <text evidence="4">Catalyzes the post-translational formation of 4-hydroxyproline in -Xaa-Pro-Gly- sequences in collagens and other proteins.</text>
</comment>
<comment type="catalytic activity">
    <reaction evidence="4">
        <text>L-prolyl-[collagen] + 2-oxoglutarate + O2 = trans-4-hydroxy-L-prolyl-[collagen] + succinate + CO2</text>
        <dbReference type="Rhea" id="RHEA:18945"/>
        <dbReference type="Rhea" id="RHEA-COMP:11676"/>
        <dbReference type="Rhea" id="RHEA-COMP:11680"/>
        <dbReference type="ChEBI" id="CHEBI:15379"/>
        <dbReference type="ChEBI" id="CHEBI:16526"/>
        <dbReference type="ChEBI" id="CHEBI:16810"/>
        <dbReference type="ChEBI" id="CHEBI:30031"/>
        <dbReference type="ChEBI" id="CHEBI:50342"/>
        <dbReference type="ChEBI" id="CHEBI:61965"/>
        <dbReference type="EC" id="1.14.11.2"/>
    </reaction>
    <physiologicalReaction direction="left-to-right" evidence="8">
        <dbReference type="Rhea" id="RHEA:18946"/>
    </physiologicalReaction>
</comment>
<comment type="cofactor">
    <cofactor evidence="8">
        <name>Fe(2+)</name>
        <dbReference type="ChEBI" id="CHEBI:29033"/>
    </cofactor>
    <text>Binds 1 Fe(2+) ion per subunit.</text>
</comment>
<comment type="cofactor">
    <cofactor evidence="8">
        <name>L-ascorbate</name>
        <dbReference type="ChEBI" id="CHEBI:38290"/>
    </cofactor>
</comment>
<comment type="activity regulation">
    <text evidence="4">Inhibited by poly(L-proline).</text>
</comment>
<comment type="biophysicochemical properties">
    <kinetics>
        <KM evidence="4">22 uM for 2-oxoglutarate</KM>
    </kinetics>
</comment>
<comment type="subunit">
    <text evidence="4">Heterotetramer of two alpha-1 chains and two beta chains (P4HB)(the beta chain is the multi-functional PDI), where P4HB plays the role of a structural subunit; this tetramer catalyzes the formation of 4-hydroxyproline in collagen.</text>
</comment>
<comment type="subcellular location">
    <subcellularLocation>
        <location>Endoplasmic reticulum lumen</location>
    </subcellularLocation>
</comment>
<comment type="alternative products">
    <event type="alternative splicing"/>
    <isoform>
        <id>Q60715-1</id>
        <name>1</name>
        <sequence type="displayed"/>
    </isoform>
    <isoform>
        <id>Q60715-2</id>
        <name>2</name>
        <name evidence="6">alpha(I)</name>
        <sequence type="described" ref="VSP_004505"/>
    </isoform>
</comment>
<comment type="tissue specificity">
    <text evidence="4">Expressed at least in brain, heart and lung.</text>
</comment>
<comment type="similarity">
    <text evidence="7">Belongs to the P4HA family.</text>
</comment>
<organism>
    <name type="scientific">Mus musculus</name>
    <name type="common">Mouse</name>
    <dbReference type="NCBI Taxonomy" id="10090"/>
    <lineage>
        <taxon>Eukaryota</taxon>
        <taxon>Metazoa</taxon>
        <taxon>Chordata</taxon>
        <taxon>Craniata</taxon>
        <taxon>Vertebrata</taxon>
        <taxon>Euteleostomi</taxon>
        <taxon>Mammalia</taxon>
        <taxon>Eutheria</taxon>
        <taxon>Euarchontoglires</taxon>
        <taxon>Glires</taxon>
        <taxon>Rodentia</taxon>
        <taxon>Myomorpha</taxon>
        <taxon>Muroidea</taxon>
        <taxon>Muridae</taxon>
        <taxon>Murinae</taxon>
        <taxon>Mus</taxon>
        <taxon>Mus</taxon>
    </lineage>
</organism>
<sequence length="534" mass="60910">MIWVVLMMAILLPQSLAHPGFFTSIGQMTDLIHNEKDLVTSLKDYIKAEEDKLEQIKKWAEKLDRLTSTATKDPEGFVGHPVNAFKLMKRLNTEWSELENLILKDMSDGFISNLTIQRQYFPNDEDQVGAAKALFRLQDTYNLDTNTISKGNLPGVQHKSFLTAEDCFELGKVAYTEADYYHTELWMEQALTQLEEGELSTVDKVSVLDYLSYAVYQQGDLDKALLLTKKLLELDPEHQRANGNLVYFEYIMSKEKDANKSASGDQSDQKTAPKKKGIAVDYLPERQKYEMLCRGEGIKMTPRRQKRLFCRYHDGNRNPKFILAPAKQEDEWDKPRIIRFHDIISDAEIEIVKDLAKPRLRRATISNPVTGALETVHYRISKSAWLSGYEDPVVSRINMRIQDLTGLDVSTAEELQVANYGVGGQYEPHFDFARKDEPDAFRELGTGNRIATWLFYMSDVSAGGATVFPEVGASVWPKKGTAVFWYNLFASGEGDYSTRHAACPVLVGNKWVSNKWLHERGQEFRRPCTLSELE</sequence>
<protein>
    <recommendedName>
        <fullName>Prolyl 4-hydroxylase subunit alpha-1</fullName>
        <shortName>4-PH alpha-1</shortName>
        <ecNumber evidence="4">1.14.11.2</ecNumber>
    </recommendedName>
    <alternativeName>
        <fullName>Procollagen-proline,2-oxoglutarate-4-dioxygenase subunit alpha-1</fullName>
    </alternativeName>
</protein>
<reference key="1">
    <citation type="journal article" date="2005" name="Science">
        <title>The transcriptional landscape of the mammalian genome.</title>
        <authorList>
            <person name="Carninci P."/>
            <person name="Kasukawa T."/>
            <person name="Katayama S."/>
            <person name="Gough J."/>
            <person name="Frith M.C."/>
            <person name="Maeda N."/>
            <person name="Oyama R."/>
            <person name="Ravasi T."/>
            <person name="Lenhard B."/>
            <person name="Wells C."/>
            <person name="Kodzius R."/>
            <person name="Shimokawa K."/>
            <person name="Bajic V.B."/>
            <person name="Brenner S.E."/>
            <person name="Batalov S."/>
            <person name="Forrest A.R."/>
            <person name="Zavolan M."/>
            <person name="Davis M.J."/>
            <person name="Wilming L.G."/>
            <person name="Aidinis V."/>
            <person name="Allen J.E."/>
            <person name="Ambesi-Impiombato A."/>
            <person name="Apweiler R."/>
            <person name="Aturaliya R.N."/>
            <person name="Bailey T.L."/>
            <person name="Bansal M."/>
            <person name="Baxter L."/>
            <person name="Beisel K.W."/>
            <person name="Bersano T."/>
            <person name="Bono H."/>
            <person name="Chalk A.M."/>
            <person name="Chiu K.P."/>
            <person name="Choudhary V."/>
            <person name="Christoffels A."/>
            <person name="Clutterbuck D.R."/>
            <person name="Crowe M.L."/>
            <person name="Dalla E."/>
            <person name="Dalrymple B.P."/>
            <person name="de Bono B."/>
            <person name="Della Gatta G."/>
            <person name="di Bernardo D."/>
            <person name="Down T."/>
            <person name="Engstrom P."/>
            <person name="Fagiolini M."/>
            <person name="Faulkner G."/>
            <person name="Fletcher C.F."/>
            <person name="Fukushima T."/>
            <person name="Furuno M."/>
            <person name="Futaki S."/>
            <person name="Gariboldi M."/>
            <person name="Georgii-Hemming P."/>
            <person name="Gingeras T.R."/>
            <person name="Gojobori T."/>
            <person name="Green R.E."/>
            <person name="Gustincich S."/>
            <person name="Harbers M."/>
            <person name="Hayashi Y."/>
            <person name="Hensch T.K."/>
            <person name="Hirokawa N."/>
            <person name="Hill D."/>
            <person name="Huminiecki L."/>
            <person name="Iacono M."/>
            <person name="Ikeo K."/>
            <person name="Iwama A."/>
            <person name="Ishikawa T."/>
            <person name="Jakt M."/>
            <person name="Kanapin A."/>
            <person name="Katoh M."/>
            <person name="Kawasawa Y."/>
            <person name="Kelso J."/>
            <person name="Kitamura H."/>
            <person name="Kitano H."/>
            <person name="Kollias G."/>
            <person name="Krishnan S.P."/>
            <person name="Kruger A."/>
            <person name="Kummerfeld S.K."/>
            <person name="Kurochkin I.V."/>
            <person name="Lareau L.F."/>
            <person name="Lazarevic D."/>
            <person name="Lipovich L."/>
            <person name="Liu J."/>
            <person name="Liuni S."/>
            <person name="McWilliam S."/>
            <person name="Madan Babu M."/>
            <person name="Madera M."/>
            <person name="Marchionni L."/>
            <person name="Matsuda H."/>
            <person name="Matsuzawa S."/>
            <person name="Miki H."/>
            <person name="Mignone F."/>
            <person name="Miyake S."/>
            <person name="Morris K."/>
            <person name="Mottagui-Tabar S."/>
            <person name="Mulder N."/>
            <person name="Nakano N."/>
            <person name="Nakauchi H."/>
            <person name="Ng P."/>
            <person name="Nilsson R."/>
            <person name="Nishiguchi S."/>
            <person name="Nishikawa S."/>
            <person name="Nori F."/>
            <person name="Ohara O."/>
            <person name="Okazaki Y."/>
            <person name="Orlando V."/>
            <person name="Pang K.C."/>
            <person name="Pavan W.J."/>
            <person name="Pavesi G."/>
            <person name="Pesole G."/>
            <person name="Petrovsky N."/>
            <person name="Piazza S."/>
            <person name="Reed J."/>
            <person name="Reid J.F."/>
            <person name="Ring B.Z."/>
            <person name="Ringwald M."/>
            <person name="Rost B."/>
            <person name="Ruan Y."/>
            <person name="Salzberg S.L."/>
            <person name="Sandelin A."/>
            <person name="Schneider C."/>
            <person name="Schoenbach C."/>
            <person name="Sekiguchi K."/>
            <person name="Semple C.A."/>
            <person name="Seno S."/>
            <person name="Sessa L."/>
            <person name="Sheng Y."/>
            <person name="Shibata Y."/>
            <person name="Shimada H."/>
            <person name="Shimada K."/>
            <person name="Silva D."/>
            <person name="Sinclair B."/>
            <person name="Sperling S."/>
            <person name="Stupka E."/>
            <person name="Sugiura K."/>
            <person name="Sultana R."/>
            <person name="Takenaka Y."/>
            <person name="Taki K."/>
            <person name="Tammoja K."/>
            <person name="Tan S.L."/>
            <person name="Tang S."/>
            <person name="Taylor M.S."/>
            <person name="Tegner J."/>
            <person name="Teichmann S.A."/>
            <person name="Ueda H.R."/>
            <person name="van Nimwegen E."/>
            <person name="Verardo R."/>
            <person name="Wei C.L."/>
            <person name="Yagi K."/>
            <person name="Yamanishi H."/>
            <person name="Zabarovsky E."/>
            <person name="Zhu S."/>
            <person name="Zimmer A."/>
            <person name="Hide W."/>
            <person name="Bult C."/>
            <person name="Grimmond S.M."/>
            <person name="Teasdale R.D."/>
            <person name="Liu E.T."/>
            <person name="Brusic V."/>
            <person name="Quackenbush J."/>
            <person name="Wahlestedt C."/>
            <person name="Mattick J.S."/>
            <person name="Hume D.A."/>
            <person name="Kai C."/>
            <person name="Sasaki D."/>
            <person name="Tomaru Y."/>
            <person name="Fukuda S."/>
            <person name="Kanamori-Katayama M."/>
            <person name="Suzuki M."/>
            <person name="Aoki J."/>
            <person name="Arakawa T."/>
            <person name="Iida J."/>
            <person name="Imamura K."/>
            <person name="Itoh M."/>
            <person name="Kato T."/>
            <person name="Kawaji H."/>
            <person name="Kawagashira N."/>
            <person name="Kawashima T."/>
            <person name="Kojima M."/>
            <person name="Kondo S."/>
            <person name="Konno H."/>
            <person name="Nakano K."/>
            <person name="Ninomiya N."/>
            <person name="Nishio T."/>
            <person name="Okada M."/>
            <person name="Plessy C."/>
            <person name="Shibata K."/>
            <person name="Shiraki T."/>
            <person name="Suzuki S."/>
            <person name="Tagami M."/>
            <person name="Waki K."/>
            <person name="Watahiki A."/>
            <person name="Okamura-Oho Y."/>
            <person name="Suzuki H."/>
            <person name="Kawai J."/>
            <person name="Hayashizaki Y."/>
        </authorList>
    </citation>
    <scope>NUCLEOTIDE SEQUENCE [LARGE SCALE MRNA] (ISOFORMS 1 AND 2)</scope>
    <source>
        <strain>C57BL/6J</strain>
        <strain>NOD</strain>
        <tissue>Embryo</tissue>
        <tissue>Head</tissue>
        <tissue>Thymus</tissue>
    </source>
</reference>
<reference key="2">
    <citation type="journal article" date="2004" name="Genome Res.">
        <title>The status, quality, and expansion of the NIH full-length cDNA project: the Mammalian Gene Collection (MGC).</title>
        <authorList>
            <consortium name="The MGC Project Team"/>
        </authorList>
    </citation>
    <scope>NUCLEOTIDE SEQUENCE [LARGE SCALE MRNA] (ISOFORM 1)</scope>
    <source>
        <tissue>Mammary tumor</tissue>
    </source>
</reference>
<reference key="3">
    <citation type="journal article" date="1995" name="Proc. Natl. Acad. Sci. U.S.A.">
        <title>Cloning, baculovirus expression, and characterization of a second mouse prolyl 4-hydroxylase alpha-subunit isoform: formation of an alpha 2 beta 2 tetramer with the protein disulfide-isomerase/beta subunit.</title>
        <authorList>
            <person name="Helaakoski T."/>
            <person name="Annunen P."/>
            <person name="Vuori K."/>
            <person name="Macneil I.A."/>
            <person name="Pihlajaniemi T."/>
            <person name="Kivirikko K.I."/>
        </authorList>
    </citation>
    <scope>NUCLEOTIDE SEQUENCE [MRNA] OF 9-534 (ISOFORM 2)</scope>
    <scope>FUNCTION</scope>
    <scope>COFACTOR</scope>
    <scope>SUBUNIT</scope>
    <scope>ACTIVITY REGULATION</scope>
    <scope>CATALYTIC ACTIVITY</scope>
    <scope>BIOPHYSICOCHEMICAL PROPERTIES</scope>
    <scope>TISSUE SPECIFICITY</scope>
</reference>
<reference key="4">
    <citation type="journal article" date="2010" name="Cell">
        <title>A tissue-specific atlas of mouse protein phosphorylation and expression.</title>
        <authorList>
            <person name="Huttlin E.L."/>
            <person name="Jedrychowski M.P."/>
            <person name="Elias J.E."/>
            <person name="Goswami T."/>
            <person name="Rad R."/>
            <person name="Beausoleil S.A."/>
            <person name="Villen J."/>
            <person name="Haas W."/>
            <person name="Sowa M.E."/>
            <person name="Gygi S.P."/>
        </authorList>
    </citation>
    <scope>IDENTIFICATION BY MASS SPECTROMETRY [LARGE SCALE ANALYSIS]</scope>
    <source>
        <tissue>Brain</tissue>
        <tissue>Brown adipose tissue</tissue>
        <tissue>Heart</tissue>
        <tissue>Kidney</tissue>
        <tissue>Liver</tissue>
        <tissue>Lung</tissue>
        <tissue>Spleen</tissue>
        <tissue>Testis</tissue>
    </source>
</reference>
<feature type="signal peptide" evidence="1">
    <location>
        <begin position="1"/>
        <end position="17"/>
    </location>
</feature>
<feature type="chain" id="PRO_0000022724" description="Prolyl 4-hydroxylase subunit alpha-1">
    <location>
        <begin position="18"/>
        <end position="534"/>
    </location>
</feature>
<feature type="repeat" description="TPR">
    <location>
        <begin position="205"/>
        <end position="238"/>
    </location>
</feature>
<feature type="domain" description="Fe2OG dioxygenase" evidence="3">
    <location>
        <begin position="411"/>
        <end position="519"/>
    </location>
</feature>
<feature type="binding site" evidence="3">
    <location>
        <position position="429"/>
    </location>
    <ligand>
        <name>Fe cation</name>
        <dbReference type="ChEBI" id="CHEBI:24875"/>
    </ligand>
</feature>
<feature type="binding site" evidence="3">
    <location>
        <position position="431"/>
    </location>
    <ligand>
        <name>Fe cation</name>
        <dbReference type="ChEBI" id="CHEBI:24875"/>
    </ligand>
</feature>
<feature type="binding site" evidence="3">
    <location>
        <position position="500"/>
    </location>
    <ligand>
        <name>Fe cation</name>
        <dbReference type="ChEBI" id="CHEBI:24875"/>
    </ligand>
</feature>
<feature type="binding site" evidence="3">
    <location>
        <position position="510"/>
    </location>
    <ligand>
        <name>2-oxoglutarate</name>
        <dbReference type="ChEBI" id="CHEBI:16810"/>
    </ligand>
</feature>
<feature type="glycosylation site" description="N-linked (GlcNAc...) asparagine" evidence="2">
    <location>
        <position position="113"/>
    </location>
</feature>
<feature type="glycosylation site" description="N-linked (GlcNAc...) asparagine" evidence="2">
    <location>
        <position position="259"/>
    </location>
</feature>
<feature type="splice variant" id="VSP_004505" description="In isoform 2." evidence="5 6">
    <original>RRATISNPVTGALETVHYRI</original>
    <variation>SRATVHDPETGKLTTAQYRV</variation>
    <location>
        <begin position="361"/>
        <end position="380"/>
    </location>
</feature>
<feature type="sequence conflict" description="In Ref. 3; AAC52197." evidence="7" ref="3">
    <original>T</original>
    <variation>R</variation>
    <location>
        <position position="69"/>
    </location>
</feature>
<feature type="sequence conflict" description="In Ref. 3; AAC52197." evidence="7" ref="3">
    <original>T</original>
    <variation>N</variation>
    <location>
        <position position="147"/>
    </location>
</feature>
<feature type="sequence conflict" description="In Ref. 3; AAC52197." evidence="7" ref="3">
    <original>D</original>
    <variation>Y</variation>
    <location>
        <position position="354"/>
    </location>
</feature>
<evidence type="ECO:0000250" key="1"/>
<evidence type="ECO:0000255" key="2"/>
<evidence type="ECO:0000255" key="3">
    <source>
        <dbReference type="PROSITE-ProRule" id="PRU00805"/>
    </source>
</evidence>
<evidence type="ECO:0000269" key="4">
    <source>
    </source>
</evidence>
<evidence type="ECO:0000303" key="5">
    <source>
    </source>
</evidence>
<evidence type="ECO:0000303" key="6">
    <source>
    </source>
</evidence>
<evidence type="ECO:0000305" key="7"/>
<evidence type="ECO:0000305" key="8">
    <source>
    </source>
</evidence>
<proteinExistence type="evidence at protein level"/>